<dbReference type="EMBL" id="CP000111">
    <property type="protein sequence ID" value="ABB50860.1"/>
    <property type="molecule type" value="Genomic_DNA"/>
</dbReference>
<dbReference type="RefSeq" id="WP_011377341.1">
    <property type="nucleotide sequence ID" value="NC_007577.1"/>
</dbReference>
<dbReference type="SMR" id="Q317T5"/>
<dbReference type="STRING" id="74546.PMT9312_1799"/>
<dbReference type="KEGG" id="pmi:PMT9312_1799"/>
<dbReference type="eggNOG" id="COG0360">
    <property type="taxonomic scope" value="Bacteria"/>
</dbReference>
<dbReference type="HOGENOM" id="CLU_113441_4_2_3"/>
<dbReference type="OrthoDB" id="9812702at2"/>
<dbReference type="Proteomes" id="UP000002715">
    <property type="component" value="Chromosome"/>
</dbReference>
<dbReference type="GO" id="GO:0005737">
    <property type="term" value="C:cytoplasm"/>
    <property type="evidence" value="ECO:0007669"/>
    <property type="project" value="UniProtKB-ARBA"/>
</dbReference>
<dbReference type="GO" id="GO:1990904">
    <property type="term" value="C:ribonucleoprotein complex"/>
    <property type="evidence" value="ECO:0007669"/>
    <property type="project" value="UniProtKB-KW"/>
</dbReference>
<dbReference type="GO" id="GO:0005840">
    <property type="term" value="C:ribosome"/>
    <property type="evidence" value="ECO:0007669"/>
    <property type="project" value="UniProtKB-KW"/>
</dbReference>
<dbReference type="GO" id="GO:0070181">
    <property type="term" value="F:small ribosomal subunit rRNA binding"/>
    <property type="evidence" value="ECO:0007669"/>
    <property type="project" value="TreeGrafter"/>
</dbReference>
<dbReference type="GO" id="GO:0003735">
    <property type="term" value="F:structural constituent of ribosome"/>
    <property type="evidence" value="ECO:0007669"/>
    <property type="project" value="InterPro"/>
</dbReference>
<dbReference type="GO" id="GO:0006412">
    <property type="term" value="P:translation"/>
    <property type="evidence" value="ECO:0007669"/>
    <property type="project" value="UniProtKB-UniRule"/>
</dbReference>
<dbReference type="CDD" id="cd15487">
    <property type="entry name" value="bS6_chloro_cyano"/>
    <property type="match status" value="1"/>
</dbReference>
<dbReference type="Gene3D" id="3.30.70.60">
    <property type="match status" value="1"/>
</dbReference>
<dbReference type="HAMAP" id="MF_00360">
    <property type="entry name" value="Ribosomal_bS6"/>
    <property type="match status" value="1"/>
</dbReference>
<dbReference type="InterPro" id="IPR000529">
    <property type="entry name" value="Ribosomal_bS6"/>
</dbReference>
<dbReference type="InterPro" id="IPR020815">
    <property type="entry name" value="Ribosomal_bS6_CS"/>
</dbReference>
<dbReference type="InterPro" id="IPR035980">
    <property type="entry name" value="Ribosomal_bS6_sf"/>
</dbReference>
<dbReference type="InterPro" id="IPR020814">
    <property type="entry name" value="Ribosomal_S6_plastid/chlpt"/>
</dbReference>
<dbReference type="InterPro" id="IPR014717">
    <property type="entry name" value="Transl_elong_EF1B/ribsomal_bS6"/>
</dbReference>
<dbReference type="NCBIfam" id="TIGR00166">
    <property type="entry name" value="S6"/>
    <property type="match status" value="1"/>
</dbReference>
<dbReference type="PANTHER" id="PTHR21011">
    <property type="entry name" value="MITOCHONDRIAL 28S RIBOSOMAL PROTEIN S6"/>
    <property type="match status" value="1"/>
</dbReference>
<dbReference type="PANTHER" id="PTHR21011:SF1">
    <property type="entry name" value="SMALL RIBOSOMAL SUBUNIT PROTEIN BS6M"/>
    <property type="match status" value="1"/>
</dbReference>
<dbReference type="Pfam" id="PF01250">
    <property type="entry name" value="Ribosomal_S6"/>
    <property type="match status" value="1"/>
</dbReference>
<dbReference type="SUPFAM" id="SSF54995">
    <property type="entry name" value="Ribosomal protein S6"/>
    <property type="match status" value="1"/>
</dbReference>
<dbReference type="PROSITE" id="PS01048">
    <property type="entry name" value="RIBOSOMAL_S6"/>
    <property type="match status" value="1"/>
</dbReference>
<reference key="1">
    <citation type="journal article" date="2006" name="Science">
        <title>Genomic islands and the ecology and evolution of Prochlorococcus.</title>
        <authorList>
            <person name="Coleman M.L."/>
            <person name="Sullivan M.B."/>
            <person name="Martiny A.C."/>
            <person name="Steglich C."/>
            <person name="Barry K."/>
            <person name="Delong E.F."/>
            <person name="Chisholm S.W."/>
        </authorList>
    </citation>
    <scope>NUCLEOTIDE SEQUENCE [LARGE SCALE GENOMIC DNA]</scope>
    <source>
        <strain>MIT 9312</strain>
    </source>
</reference>
<organism>
    <name type="scientific">Prochlorococcus marinus (strain MIT 9312)</name>
    <dbReference type="NCBI Taxonomy" id="74546"/>
    <lineage>
        <taxon>Bacteria</taxon>
        <taxon>Bacillati</taxon>
        <taxon>Cyanobacteriota</taxon>
        <taxon>Cyanophyceae</taxon>
        <taxon>Synechococcales</taxon>
        <taxon>Prochlorococcaceae</taxon>
        <taxon>Prochlorococcus</taxon>
    </lineage>
</organism>
<name>RS6_PROM9</name>
<sequence length="152" mass="17545">MTNQSYYETMYILRPDIAEDEVTNHIDKYNKLLEEFGGTILDSQMRGKRRLAYQIAKHREGIYVQLSHQGDGQHIFKIEKAMRISEDVIRYMTVKQEGPLPTPKPSNKSSTQSENKDNPETKVESKEEQSVTNSDTSTTKKDDNEIKENTES</sequence>
<proteinExistence type="inferred from homology"/>
<gene>
    <name evidence="1" type="primary">rpsF</name>
    <name evidence="1" type="synonym">rps6</name>
    <name type="ordered locus">PMT9312_1799</name>
</gene>
<feature type="chain" id="PRO_0000229562" description="Small ribosomal subunit protein bS6">
    <location>
        <begin position="1"/>
        <end position="152"/>
    </location>
</feature>
<feature type="region of interest" description="Disordered" evidence="2">
    <location>
        <begin position="94"/>
        <end position="152"/>
    </location>
</feature>
<feature type="compositionally biased region" description="Basic and acidic residues" evidence="2">
    <location>
        <begin position="114"/>
        <end position="129"/>
    </location>
</feature>
<feature type="compositionally biased region" description="Basic and acidic residues" evidence="2">
    <location>
        <begin position="138"/>
        <end position="152"/>
    </location>
</feature>
<evidence type="ECO:0000255" key="1">
    <source>
        <dbReference type="HAMAP-Rule" id="MF_00360"/>
    </source>
</evidence>
<evidence type="ECO:0000256" key="2">
    <source>
        <dbReference type="SAM" id="MobiDB-lite"/>
    </source>
</evidence>
<evidence type="ECO:0000305" key="3"/>
<comment type="function">
    <text evidence="1">Binds together with bS18 to 16S ribosomal RNA.</text>
</comment>
<comment type="similarity">
    <text evidence="1">Belongs to the bacterial ribosomal protein bS6 family.</text>
</comment>
<keyword id="KW-0687">Ribonucleoprotein</keyword>
<keyword id="KW-0689">Ribosomal protein</keyword>
<keyword id="KW-0694">RNA-binding</keyword>
<keyword id="KW-0699">rRNA-binding</keyword>
<protein>
    <recommendedName>
        <fullName evidence="1">Small ribosomal subunit protein bS6</fullName>
    </recommendedName>
    <alternativeName>
        <fullName evidence="3">30S ribosomal protein S6</fullName>
    </alternativeName>
</protein>
<accession>Q317T5</accession>